<comment type="function">
    <text evidence="1">Acts as a key regulator of dendritic field orientation during development of sensory cortex. Also directs dendrites toward active axon terminals when ectopically expressed (By similarity).</text>
</comment>
<comment type="subcellular location">
    <subcellularLocation>
        <location evidence="1">Cytoplasm</location>
        <location evidence="1">Cytosol</location>
    </subcellularLocation>
    <subcellularLocation>
        <location evidence="1">Nucleus</location>
    </subcellularLocation>
    <text evidence="1">Translocates from the cytosol to the nucleus in response to neuronal activity.</text>
</comment>
<comment type="tissue specificity">
    <text evidence="3">Strongly expressed in the primary visual cortex.</text>
</comment>
<accession>F7ASZ0</accession>
<accession>F7HEN6</accession>
<proteinExistence type="evidence at transcript level"/>
<feature type="chain" id="PRO_0000425204" description="BTB/POZ domain-containing protein 3">
    <location>
        <begin position="1"/>
        <end position="522"/>
    </location>
</feature>
<feature type="domain" description="BTB" evidence="2">
    <location>
        <begin position="120"/>
        <end position="190"/>
    </location>
</feature>
<feature type="domain" description="BACK">
    <location>
        <begin position="235"/>
        <end position="300"/>
    </location>
</feature>
<protein>
    <recommendedName>
        <fullName>BTB/POZ domain-containing protein 3</fullName>
    </recommendedName>
</protein>
<evidence type="ECO:0000250" key="1"/>
<evidence type="ECO:0000255" key="2">
    <source>
        <dbReference type="PROSITE-ProRule" id="PRU00037"/>
    </source>
</evidence>
<evidence type="ECO:0000269" key="3">
    <source>
    </source>
</evidence>
<keyword id="KW-0963">Cytoplasm</keyword>
<keyword id="KW-0524">Neurogenesis</keyword>
<keyword id="KW-0539">Nucleus</keyword>
<keyword id="KW-1185">Reference proteome</keyword>
<organism>
    <name type="scientific">Callithrix jacchus</name>
    <name type="common">White-tufted-ear marmoset</name>
    <dbReference type="NCBI Taxonomy" id="9483"/>
    <lineage>
        <taxon>Eukaryota</taxon>
        <taxon>Metazoa</taxon>
        <taxon>Chordata</taxon>
        <taxon>Craniata</taxon>
        <taxon>Vertebrata</taxon>
        <taxon>Euteleostomi</taxon>
        <taxon>Mammalia</taxon>
        <taxon>Eutheria</taxon>
        <taxon>Euarchontoglires</taxon>
        <taxon>Primates</taxon>
        <taxon>Haplorrhini</taxon>
        <taxon>Platyrrhini</taxon>
        <taxon>Cebidae</taxon>
        <taxon>Callitrichinae</taxon>
        <taxon>Callithrix</taxon>
        <taxon>Callithrix</taxon>
    </lineage>
</organism>
<sequence length="522" mass="58358">MVDDKEKNMKCLTFFLMLPETVKNRSKKSSKKANTGSSSSNSSKLPPVCYEIITLKTKKKKMAADIFPRKKPANSSSTSVQQYHQQNLSNNNLIPAPNWQGLYPTIRERNAVMFNNDLMADVHFVVGPPGGTQRLPGHKYVLAVGSSVFHAMFYGELAEDKDEIRIPDVEPAAFLAMLKYIYCDEIDLAADTVLATLYAAKKYIVPHLARACVNFLETSLSAKNACVLLSQSCLFEEPDLTQRCWEVIDAQAELALKSEGFCDIDFQTLESILRRETLNAKEIVVFEAALNWAEVECQRQDLALSIENKRKVLGKALYLIRIPTMALDDFANGAAQSGVLTLNETNDIFLWYTAAKKPELQFVSKARKGLVPQRCHRFQSCAYRSNQWRYRGRCDSIQFAVDKRVFIAGFGLYGSSCGSAEYSAKIELKRQGVVLGQNLSKYFSDGSSNTFPVWFEYPVQIEPDTFYTASVILDGNELSYFGQEGMTEVQCGKVTVQFQCSSDSTNGTGVQGGQIPELIFYA</sequence>
<dbReference type="EMBL" id="GAMT01001310">
    <property type="protein sequence ID" value="JAB10551.1"/>
    <property type="molecule type" value="mRNA"/>
</dbReference>
<dbReference type="EMBL" id="GAMS01004918">
    <property type="protein sequence ID" value="JAB18218.1"/>
    <property type="molecule type" value="mRNA"/>
</dbReference>
<dbReference type="EMBL" id="GAMR01003066">
    <property type="protein sequence ID" value="JAB30866.1"/>
    <property type="molecule type" value="mRNA"/>
</dbReference>
<dbReference type="EMBL" id="GAMP01000191">
    <property type="protein sequence ID" value="JAB52564.1"/>
    <property type="molecule type" value="mRNA"/>
</dbReference>
<dbReference type="EMBL" id="ACFV01035945">
    <property type="status" value="NOT_ANNOTATED_CDS"/>
    <property type="molecule type" value="Genomic_DNA"/>
</dbReference>
<dbReference type="RefSeq" id="XP_002747409.3">
    <property type="nucleotide sequence ID" value="XM_002747363.5"/>
</dbReference>
<dbReference type="SMR" id="F7ASZ0"/>
<dbReference type="FunCoup" id="F7ASZ0">
    <property type="interactions" value="2888"/>
</dbReference>
<dbReference type="STRING" id="9483.ENSCJAP00000070629"/>
<dbReference type="GeneID" id="100385566"/>
<dbReference type="KEGG" id="cjc:100385566"/>
<dbReference type="CTD" id="22903"/>
<dbReference type="eggNOG" id="KOG2075">
    <property type="taxonomic scope" value="Eukaryota"/>
</dbReference>
<dbReference type="InParanoid" id="F7ASZ0"/>
<dbReference type="OrthoDB" id="636773at2759"/>
<dbReference type="TreeFam" id="TF106482"/>
<dbReference type="Proteomes" id="UP000008225">
    <property type="component" value="Chromosome 5"/>
</dbReference>
<dbReference type="Bgee" id="ENSCJAG00000058374">
    <property type="expression patterns" value="Expressed in cerebellum and 6 other cell types or tissues"/>
</dbReference>
<dbReference type="GO" id="GO:0005829">
    <property type="term" value="C:cytosol"/>
    <property type="evidence" value="ECO:0000250"/>
    <property type="project" value="UniProtKB"/>
</dbReference>
<dbReference type="GO" id="GO:0005634">
    <property type="term" value="C:nucleus"/>
    <property type="evidence" value="ECO:0000250"/>
    <property type="project" value="UniProtKB"/>
</dbReference>
<dbReference type="GO" id="GO:0021987">
    <property type="term" value="P:cerebral cortex development"/>
    <property type="evidence" value="ECO:0000250"/>
    <property type="project" value="UniProtKB"/>
</dbReference>
<dbReference type="GO" id="GO:0048813">
    <property type="term" value="P:dendrite morphogenesis"/>
    <property type="evidence" value="ECO:0000250"/>
    <property type="project" value="UniProtKB"/>
</dbReference>
<dbReference type="CDD" id="cd18524">
    <property type="entry name" value="BACK_BTBD3"/>
    <property type="match status" value="1"/>
</dbReference>
<dbReference type="CDD" id="cd18348">
    <property type="entry name" value="BTB_POZ_BTBD3"/>
    <property type="match status" value="1"/>
</dbReference>
<dbReference type="FunFam" id="1.25.40.420:FF:000003">
    <property type="entry name" value="BTB/POZ domain-containing protein 3"/>
    <property type="match status" value="1"/>
</dbReference>
<dbReference type="FunFam" id="2.60.120.820:FF:000001">
    <property type="entry name" value="BTB/POZ domain-containing protein 3"/>
    <property type="match status" value="1"/>
</dbReference>
<dbReference type="FunFam" id="3.30.710.10:FF:000015">
    <property type="entry name" value="BTB/POZ domain-containing protein 3"/>
    <property type="match status" value="1"/>
</dbReference>
<dbReference type="Gene3D" id="1.25.40.420">
    <property type="match status" value="1"/>
</dbReference>
<dbReference type="Gene3D" id="2.60.120.820">
    <property type="entry name" value="PHR domain"/>
    <property type="match status" value="1"/>
</dbReference>
<dbReference type="Gene3D" id="3.30.710.10">
    <property type="entry name" value="Potassium Channel Kv1.1, Chain A"/>
    <property type="match status" value="1"/>
</dbReference>
<dbReference type="InterPro" id="IPR011705">
    <property type="entry name" value="BACK"/>
</dbReference>
<dbReference type="InterPro" id="IPR000210">
    <property type="entry name" value="BTB/POZ_dom"/>
</dbReference>
<dbReference type="InterPro" id="IPR012983">
    <property type="entry name" value="PHR"/>
</dbReference>
<dbReference type="InterPro" id="IPR038648">
    <property type="entry name" value="PHR_sf"/>
</dbReference>
<dbReference type="InterPro" id="IPR011333">
    <property type="entry name" value="SKP1/BTB/POZ_sf"/>
</dbReference>
<dbReference type="PANTHER" id="PTHR45774">
    <property type="entry name" value="BTB/POZ DOMAIN-CONTAINING"/>
    <property type="match status" value="1"/>
</dbReference>
<dbReference type="PANTHER" id="PTHR45774:SF2">
    <property type="entry name" value="BTB_POZ DOMAIN-CONTAINING PROTEIN 3"/>
    <property type="match status" value="1"/>
</dbReference>
<dbReference type="Pfam" id="PF07707">
    <property type="entry name" value="BACK"/>
    <property type="match status" value="1"/>
</dbReference>
<dbReference type="Pfam" id="PF00651">
    <property type="entry name" value="BTB"/>
    <property type="match status" value="1"/>
</dbReference>
<dbReference type="Pfam" id="PF08005">
    <property type="entry name" value="PHR"/>
    <property type="match status" value="1"/>
</dbReference>
<dbReference type="SMART" id="SM00875">
    <property type="entry name" value="BACK"/>
    <property type="match status" value="1"/>
</dbReference>
<dbReference type="SMART" id="SM00225">
    <property type="entry name" value="BTB"/>
    <property type="match status" value="1"/>
</dbReference>
<dbReference type="SUPFAM" id="SSF54695">
    <property type="entry name" value="POZ domain"/>
    <property type="match status" value="1"/>
</dbReference>
<dbReference type="PROSITE" id="PS50097">
    <property type="entry name" value="BTB"/>
    <property type="match status" value="1"/>
</dbReference>
<gene>
    <name type="primary">BTBD3</name>
</gene>
<reference key="1">
    <citation type="journal article" date="2014" name="Gigascience">
        <title>De novo assembly of the common marmoset transcriptome from NextGen mRNA sequences.</title>
        <authorList>
            <person name="Maudhoo M.D."/>
            <person name="Ren D."/>
            <person name="Gradnigo J.S."/>
            <person name="Gibbs R.M."/>
            <person name="Lubker A.C."/>
            <person name="Moriyama E.N."/>
            <person name="French J.A."/>
            <person name="Norgren R.B. Jr."/>
        </authorList>
    </citation>
    <scope>NUCLEOTIDE SEQUENCE [LARGE SCALE MRNA]</scope>
    <source>
        <tissue>Brain cortex</tissue>
        <tissue>Cerebellum</tissue>
        <tissue>Hippocampus</tissue>
        <tissue>Urinary bladder</tissue>
    </source>
</reference>
<reference key="2">
    <citation type="submission" date="2009-03" db="EMBL/GenBank/DDBJ databases">
        <authorList>
            <person name="Warren W."/>
            <person name="Ye L."/>
            <person name="Minx P."/>
            <person name="Worley K."/>
            <person name="Gibbs R."/>
            <person name="Wilson R.K."/>
        </authorList>
    </citation>
    <scope>NUCLEOTIDE SEQUENCE [LARGE SCALE GENOMIC DNA]</scope>
</reference>
<reference key="3">
    <citation type="journal article" date="2013" name="Science">
        <title>BTBD3 controls dendrite orientation toward active axons in mammalian neocortex.</title>
        <authorList>
            <person name="Matsui A."/>
            <person name="Tran M."/>
            <person name="Yoshida A.C."/>
            <person name="Kikuchi S.S."/>
            <person name="U M."/>
            <person name="Ogawa M."/>
            <person name="Shimogori T."/>
        </authorList>
    </citation>
    <scope>TISSUE SPECIFICITY</scope>
</reference>
<name>BTBD3_CALJA</name>